<name>YQGE_SALCH</name>
<gene>
    <name evidence="1" type="primary">yqgE</name>
    <name type="ordered locus">SCH_3036</name>
</gene>
<evidence type="ECO:0000255" key="1">
    <source>
        <dbReference type="HAMAP-Rule" id="MF_00758"/>
    </source>
</evidence>
<evidence type="ECO:0000305" key="2"/>
<sequence length="187" mass="20681">MNLQHHFLIAMPALQDPIFRRSVVYICEHNQDGAMGIIVNKPLENLQIEGILEKLKITPEPRDSAIRLDKAVMLGGPLAEDRGFILHTPPSRFASSIRISDNTVITTSRDVLETLGTQQQPSDVLVALGYASWDKGQLEQELLDNAWLTAPADLNILFKTPIAERWREAAKLIGIDILTMPGVAGHA</sequence>
<protein>
    <recommendedName>
        <fullName evidence="1">UPF0301 protein YqgE</fullName>
    </recommendedName>
</protein>
<reference key="1">
    <citation type="journal article" date="2005" name="Nucleic Acids Res.">
        <title>The genome sequence of Salmonella enterica serovar Choleraesuis, a highly invasive and resistant zoonotic pathogen.</title>
        <authorList>
            <person name="Chiu C.-H."/>
            <person name="Tang P."/>
            <person name="Chu C."/>
            <person name="Hu S."/>
            <person name="Bao Q."/>
            <person name="Yu J."/>
            <person name="Chou Y.-Y."/>
            <person name="Wang H.-S."/>
            <person name="Lee Y.-S."/>
        </authorList>
    </citation>
    <scope>NUCLEOTIDE SEQUENCE [LARGE SCALE GENOMIC DNA]</scope>
    <source>
        <strain>SC-B67</strain>
    </source>
</reference>
<feature type="chain" id="PRO_0000258879" description="UPF0301 protein YqgE">
    <location>
        <begin position="1"/>
        <end position="187"/>
    </location>
</feature>
<organism>
    <name type="scientific">Salmonella choleraesuis (strain SC-B67)</name>
    <dbReference type="NCBI Taxonomy" id="321314"/>
    <lineage>
        <taxon>Bacteria</taxon>
        <taxon>Pseudomonadati</taxon>
        <taxon>Pseudomonadota</taxon>
        <taxon>Gammaproteobacteria</taxon>
        <taxon>Enterobacterales</taxon>
        <taxon>Enterobacteriaceae</taxon>
        <taxon>Salmonella</taxon>
    </lineage>
</organism>
<accession>Q57K20</accession>
<proteinExistence type="inferred from homology"/>
<dbReference type="EMBL" id="AE017220">
    <property type="protein sequence ID" value="AAX66942.1"/>
    <property type="status" value="ALT_INIT"/>
    <property type="molecule type" value="Genomic_DNA"/>
</dbReference>
<dbReference type="RefSeq" id="WP_001053171.1">
    <property type="nucleotide sequence ID" value="NC_006905.1"/>
</dbReference>
<dbReference type="SMR" id="Q57K20"/>
<dbReference type="KEGG" id="sec:SCH_3036"/>
<dbReference type="HOGENOM" id="CLU_057596_1_1_6"/>
<dbReference type="Proteomes" id="UP000000538">
    <property type="component" value="Chromosome"/>
</dbReference>
<dbReference type="GO" id="GO:0005829">
    <property type="term" value="C:cytosol"/>
    <property type="evidence" value="ECO:0007669"/>
    <property type="project" value="TreeGrafter"/>
</dbReference>
<dbReference type="FunFam" id="3.30.70.1300:FF:000001">
    <property type="entry name" value="UPF0301 protein YqgE"/>
    <property type="match status" value="1"/>
</dbReference>
<dbReference type="Gene3D" id="3.40.1740.10">
    <property type="entry name" value="VC0467-like"/>
    <property type="match status" value="1"/>
</dbReference>
<dbReference type="Gene3D" id="3.30.70.1300">
    <property type="entry name" value="VC0467-like domains"/>
    <property type="match status" value="1"/>
</dbReference>
<dbReference type="HAMAP" id="MF_00758">
    <property type="entry name" value="UPF0301"/>
    <property type="match status" value="1"/>
</dbReference>
<dbReference type="InterPro" id="IPR003774">
    <property type="entry name" value="AlgH-like"/>
</dbReference>
<dbReference type="NCBIfam" id="NF001266">
    <property type="entry name" value="PRK00228.1-1"/>
    <property type="match status" value="1"/>
</dbReference>
<dbReference type="PANTHER" id="PTHR30327">
    <property type="entry name" value="UNCHARACTERIZED PROTEIN YQGE"/>
    <property type="match status" value="1"/>
</dbReference>
<dbReference type="PANTHER" id="PTHR30327:SF1">
    <property type="entry name" value="UPF0301 PROTEIN YQGE"/>
    <property type="match status" value="1"/>
</dbReference>
<dbReference type="Pfam" id="PF02622">
    <property type="entry name" value="DUF179"/>
    <property type="match status" value="1"/>
</dbReference>
<dbReference type="SUPFAM" id="SSF143456">
    <property type="entry name" value="VC0467-like"/>
    <property type="match status" value="1"/>
</dbReference>
<comment type="similarity">
    <text evidence="1">Belongs to the UPF0301 (AlgH) family.</text>
</comment>
<comment type="sequence caution" evidence="2">
    <conflict type="erroneous initiation">
        <sequence resource="EMBL-CDS" id="AAX66942"/>
    </conflict>
</comment>